<accession>B9M164</accession>
<name>RSMH_GEODF</name>
<sequence>MADFKHVSVLPAEVIAYLAPRPGGIYVDGTLGGAGHARLILEASAPDGLLIGFDQDGQALASAGERLAPFGKRVVLVKRNFAFLEEALAEIGIEAIDGFLLDVGVSSHQLDTVERGFSFQHDAPLDMRMDLSAETTAAELVNTLSEEDLCRVIREYGEERWAKRIAAFIIKRREETPIATTLQLVDVIKAAVPKGAWEVRLHPATRTFQALRIAVNDELASLEKGLSGGVRLLKKGGRGVVISFHSLEDRIAKTTFRSLAQGCKCPREIPRCVCGNLPQVKVLTGKPVVANEVEVSSNPRSRSARLRAVEKI</sequence>
<feature type="chain" id="PRO_0000386912" description="Ribosomal RNA small subunit methyltransferase H">
    <location>
        <begin position="1"/>
        <end position="312"/>
    </location>
</feature>
<feature type="binding site" evidence="1">
    <location>
        <begin position="34"/>
        <end position="36"/>
    </location>
    <ligand>
        <name>S-adenosyl-L-methionine</name>
        <dbReference type="ChEBI" id="CHEBI:59789"/>
    </ligand>
</feature>
<feature type="binding site" evidence="1">
    <location>
        <position position="54"/>
    </location>
    <ligand>
        <name>S-adenosyl-L-methionine</name>
        <dbReference type="ChEBI" id="CHEBI:59789"/>
    </ligand>
</feature>
<feature type="binding site" evidence="1">
    <location>
        <position position="81"/>
    </location>
    <ligand>
        <name>S-adenosyl-L-methionine</name>
        <dbReference type="ChEBI" id="CHEBI:59789"/>
    </ligand>
</feature>
<feature type="binding site" evidence="1">
    <location>
        <position position="102"/>
    </location>
    <ligand>
        <name>S-adenosyl-L-methionine</name>
        <dbReference type="ChEBI" id="CHEBI:59789"/>
    </ligand>
</feature>
<feature type="binding site" evidence="1">
    <location>
        <position position="109"/>
    </location>
    <ligand>
        <name>S-adenosyl-L-methionine</name>
        <dbReference type="ChEBI" id="CHEBI:59789"/>
    </ligand>
</feature>
<organism>
    <name type="scientific">Geotalea daltonii (strain DSM 22248 / JCM 15807 / FRC-32)</name>
    <name type="common">Geobacter daltonii</name>
    <dbReference type="NCBI Taxonomy" id="316067"/>
    <lineage>
        <taxon>Bacteria</taxon>
        <taxon>Pseudomonadati</taxon>
        <taxon>Thermodesulfobacteriota</taxon>
        <taxon>Desulfuromonadia</taxon>
        <taxon>Geobacterales</taxon>
        <taxon>Geobacteraceae</taxon>
        <taxon>Geotalea</taxon>
    </lineage>
</organism>
<dbReference type="EC" id="2.1.1.199" evidence="1"/>
<dbReference type="EMBL" id="CP001390">
    <property type="protein sequence ID" value="ACM19134.1"/>
    <property type="molecule type" value="Genomic_DNA"/>
</dbReference>
<dbReference type="RefSeq" id="WP_012645863.1">
    <property type="nucleotide sequence ID" value="NC_011979.1"/>
</dbReference>
<dbReference type="SMR" id="B9M164"/>
<dbReference type="STRING" id="316067.Geob_0772"/>
<dbReference type="KEGG" id="geo:Geob_0772"/>
<dbReference type="eggNOG" id="COG0275">
    <property type="taxonomic scope" value="Bacteria"/>
</dbReference>
<dbReference type="HOGENOM" id="CLU_038422_2_0_7"/>
<dbReference type="OrthoDB" id="9806637at2"/>
<dbReference type="Proteomes" id="UP000007721">
    <property type="component" value="Chromosome"/>
</dbReference>
<dbReference type="GO" id="GO:0005737">
    <property type="term" value="C:cytoplasm"/>
    <property type="evidence" value="ECO:0007669"/>
    <property type="project" value="UniProtKB-SubCell"/>
</dbReference>
<dbReference type="GO" id="GO:0071424">
    <property type="term" value="F:rRNA (cytosine-N4-)-methyltransferase activity"/>
    <property type="evidence" value="ECO:0007669"/>
    <property type="project" value="UniProtKB-UniRule"/>
</dbReference>
<dbReference type="GO" id="GO:0070475">
    <property type="term" value="P:rRNA base methylation"/>
    <property type="evidence" value="ECO:0007669"/>
    <property type="project" value="UniProtKB-UniRule"/>
</dbReference>
<dbReference type="FunFam" id="1.10.150.170:FF:000001">
    <property type="entry name" value="Ribosomal RNA small subunit methyltransferase H"/>
    <property type="match status" value="1"/>
</dbReference>
<dbReference type="Gene3D" id="1.10.150.170">
    <property type="entry name" value="Putative methyltransferase TM0872, insert domain"/>
    <property type="match status" value="1"/>
</dbReference>
<dbReference type="Gene3D" id="3.40.50.150">
    <property type="entry name" value="Vaccinia Virus protein VP39"/>
    <property type="match status" value="1"/>
</dbReference>
<dbReference type="HAMAP" id="MF_01007">
    <property type="entry name" value="16SrRNA_methyltr_H"/>
    <property type="match status" value="1"/>
</dbReference>
<dbReference type="InterPro" id="IPR002903">
    <property type="entry name" value="RsmH"/>
</dbReference>
<dbReference type="InterPro" id="IPR023397">
    <property type="entry name" value="SAM-dep_MeTrfase_MraW_recog"/>
</dbReference>
<dbReference type="InterPro" id="IPR029063">
    <property type="entry name" value="SAM-dependent_MTases_sf"/>
</dbReference>
<dbReference type="NCBIfam" id="TIGR00006">
    <property type="entry name" value="16S rRNA (cytosine(1402)-N(4))-methyltransferase RsmH"/>
    <property type="match status" value="1"/>
</dbReference>
<dbReference type="PANTHER" id="PTHR11265:SF0">
    <property type="entry name" value="12S RRNA N4-METHYLCYTIDINE METHYLTRANSFERASE"/>
    <property type="match status" value="1"/>
</dbReference>
<dbReference type="PANTHER" id="PTHR11265">
    <property type="entry name" value="S-ADENOSYL-METHYLTRANSFERASE MRAW"/>
    <property type="match status" value="1"/>
</dbReference>
<dbReference type="Pfam" id="PF01795">
    <property type="entry name" value="Methyltransf_5"/>
    <property type="match status" value="1"/>
</dbReference>
<dbReference type="PIRSF" id="PIRSF004486">
    <property type="entry name" value="MraW"/>
    <property type="match status" value="1"/>
</dbReference>
<dbReference type="SUPFAM" id="SSF81799">
    <property type="entry name" value="Putative methyltransferase TM0872, insert domain"/>
    <property type="match status" value="1"/>
</dbReference>
<dbReference type="SUPFAM" id="SSF53335">
    <property type="entry name" value="S-adenosyl-L-methionine-dependent methyltransferases"/>
    <property type="match status" value="1"/>
</dbReference>
<evidence type="ECO:0000255" key="1">
    <source>
        <dbReference type="HAMAP-Rule" id="MF_01007"/>
    </source>
</evidence>
<reference key="1">
    <citation type="submission" date="2009-01" db="EMBL/GenBank/DDBJ databases">
        <title>Complete sequence of Geobacter sp. FRC-32.</title>
        <authorList>
            <consortium name="US DOE Joint Genome Institute"/>
            <person name="Lucas S."/>
            <person name="Copeland A."/>
            <person name="Lapidus A."/>
            <person name="Glavina del Rio T."/>
            <person name="Dalin E."/>
            <person name="Tice H."/>
            <person name="Bruce D."/>
            <person name="Goodwin L."/>
            <person name="Pitluck S."/>
            <person name="Saunders E."/>
            <person name="Brettin T."/>
            <person name="Detter J.C."/>
            <person name="Han C."/>
            <person name="Larimer F."/>
            <person name="Land M."/>
            <person name="Hauser L."/>
            <person name="Kyrpides N."/>
            <person name="Ovchinnikova G."/>
            <person name="Kostka J."/>
            <person name="Richardson P."/>
        </authorList>
    </citation>
    <scope>NUCLEOTIDE SEQUENCE [LARGE SCALE GENOMIC DNA]</scope>
    <source>
        <strain>DSM 22248 / JCM 15807 / FRC-32</strain>
    </source>
</reference>
<proteinExistence type="inferred from homology"/>
<comment type="function">
    <text evidence="1">Specifically methylates the N4 position of cytidine in position 1402 (C1402) of 16S rRNA.</text>
</comment>
<comment type="catalytic activity">
    <reaction evidence="1">
        <text>cytidine(1402) in 16S rRNA + S-adenosyl-L-methionine = N(4)-methylcytidine(1402) in 16S rRNA + S-adenosyl-L-homocysteine + H(+)</text>
        <dbReference type="Rhea" id="RHEA:42928"/>
        <dbReference type="Rhea" id="RHEA-COMP:10286"/>
        <dbReference type="Rhea" id="RHEA-COMP:10287"/>
        <dbReference type="ChEBI" id="CHEBI:15378"/>
        <dbReference type="ChEBI" id="CHEBI:57856"/>
        <dbReference type="ChEBI" id="CHEBI:59789"/>
        <dbReference type="ChEBI" id="CHEBI:74506"/>
        <dbReference type="ChEBI" id="CHEBI:82748"/>
        <dbReference type="EC" id="2.1.1.199"/>
    </reaction>
</comment>
<comment type="subcellular location">
    <subcellularLocation>
        <location evidence="1">Cytoplasm</location>
    </subcellularLocation>
</comment>
<comment type="similarity">
    <text evidence="1">Belongs to the methyltransferase superfamily. RsmH family.</text>
</comment>
<gene>
    <name evidence="1" type="primary">rsmH</name>
    <name type="synonym">mraW</name>
    <name type="ordered locus">Geob_0772</name>
</gene>
<protein>
    <recommendedName>
        <fullName evidence="1">Ribosomal RNA small subunit methyltransferase H</fullName>
        <ecNumber evidence="1">2.1.1.199</ecNumber>
    </recommendedName>
    <alternativeName>
        <fullName evidence="1">16S rRNA m(4)C1402 methyltransferase</fullName>
    </alternativeName>
    <alternativeName>
        <fullName evidence="1">rRNA (cytosine-N(4)-)-methyltransferase RsmH</fullName>
    </alternativeName>
</protein>
<keyword id="KW-0963">Cytoplasm</keyword>
<keyword id="KW-0489">Methyltransferase</keyword>
<keyword id="KW-1185">Reference proteome</keyword>
<keyword id="KW-0698">rRNA processing</keyword>
<keyword id="KW-0949">S-adenosyl-L-methionine</keyword>
<keyword id="KW-0808">Transferase</keyword>